<keyword id="KW-0028">Amino-acid biosynthesis</keyword>
<keyword id="KW-0963">Cytoplasm</keyword>
<keyword id="KW-0220">Diaminopimelate biosynthesis</keyword>
<keyword id="KW-0457">Lysine biosynthesis</keyword>
<keyword id="KW-0520">NAD</keyword>
<keyword id="KW-0521">NADP</keyword>
<keyword id="KW-0560">Oxidoreductase</keyword>
<dbReference type="EC" id="1.17.1.8" evidence="1"/>
<dbReference type="EMBL" id="CP000671">
    <property type="protein sequence ID" value="ABQ98414.1"/>
    <property type="molecule type" value="Genomic_DNA"/>
</dbReference>
<dbReference type="SMR" id="A5UCB3"/>
<dbReference type="KEGG" id="hip:CGSHiEE_05135"/>
<dbReference type="HOGENOM" id="CLU_047479_2_1_6"/>
<dbReference type="UniPathway" id="UPA00034">
    <property type="reaction ID" value="UER00018"/>
</dbReference>
<dbReference type="GO" id="GO:0005829">
    <property type="term" value="C:cytosol"/>
    <property type="evidence" value="ECO:0007669"/>
    <property type="project" value="TreeGrafter"/>
</dbReference>
<dbReference type="GO" id="GO:0008839">
    <property type="term" value="F:4-hydroxy-tetrahydrodipicolinate reductase"/>
    <property type="evidence" value="ECO:0007669"/>
    <property type="project" value="UniProtKB-EC"/>
</dbReference>
<dbReference type="GO" id="GO:0051287">
    <property type="term" value="F:NAD binding"/>
    <property type="evidence" value="ECO:0007669"/>
    <property type="project" value="UniProtKB-UniRule"/>
</dbReference>
<dbReference type="GO" id="GO:0050661">
    <property type="term" value="F:NADP binding"/>
    <property type="evidence" value="ECO:0007669"/>
    <property type="project" value="UniProtKB-UniRule"/>
</dbReference>
<dbReference type="GO" id="GO:0016726">
    <property type="term" value="F:oxidoreductase activity, acting on CH or CH2 groups, NAD or NADP as acceptor"/>
    <property type="evidence" value="ECO:0007669"/>
    <property type="project" value="UniProtKB-UniRule"/>
</dbReference>
<dbReference type="GO" id="GO:0019877">
    <property type="term" value="P:diaminopimelate biosynthetic process"/>
    <property type="evidence" value="ECO:0007669"/>
    <property type="project" value="UniProtKB-UniRule"/>
</dbReference>
<dbReference type="GO" id="GO:0009089">
    <property type="term" value="P:lysine biosynthetic process via diaminopimelate"/>
    <property type="evidence" value="ECO:0007669"/>
    <property type="project" value="UniProtKB-UniRule"/>
</dbReference>
<dbReference type="CDD" id="cd02274">
    <property type="entry name" value="DHDPR_N"/>
    <property type="match status" value="1"/>
</dbReference>
<dbReference type="FunFam" id="3.30.360.10:FF:000004">
    <property type="entry name" value="4-hydroxy-tetrahydrodipicolinate reductase"/>
    <property type="match status" value="1"/>
</dbReference>
<dbReference type="FunFam" id="3.40.50.720:FF:000048">
    <property type="entry name" value="4-hydroxy-tetrahydrodipicolinate reductase"/>
    <property type="match status" value="1"/>
</dbReference>
<dbReference type="Gene3D" id="3.30.360.10">
    <property type="entry name" value="Dihydrodipicolinate Reductase, domain 2"/>
    <property type="match status" value="1"/>
</dbReference>
<dbReference type="Gene3D" id="3.40.50.720">
    <property type="entry name" value="NAD(P)-binding Rossmann-like Domain"/>
    <property type="match status" value="1"/>
</dbReference>
<dbReference type="HAMAP" id="MF_00102">
    <property type="entry name" value="DapB"/>
    <property type="match status" value="1"/>
</dbReference>
<dbReference type="InterPro" id="IPR022663">
    <property type="entry name" value="DapB_C"/>
</dbReference>
<dbReference type="InterPro" id="IPR000846">
    <property type="entry name" value="DapB_N"/>
</dbReference>
<dbReference type="InterPro" id="IPR022664">
    <property type="entry name" value="DapB_N_CS"/>
</dbReference>
<dbReference type="InterPro" id="IPR023940">
    <property type="entry name" value="DHDPR_bac"/>
</dbReference>
<dbReference type="InterPro" id="IPR036291">
    <property type="entry name" value="NAD(P)-bd_dom_sf"/>
</dbReference>
<dbReference type="NCBIfam" id="TIGR00036">
    <property type="entry name" value="dapB"/>
    <property type="match status" value="1"/>
</dbReference>
<dbReference type="PANTHER" id="PTHR20836:SF0">
    <property type="entry name" value="4-HYDROXY-TETRAHYDRODIPICOLINATE REDUCTASE 1, CHLOROPLASTIC-RELATED"/>
    <property type="match status" value="1"/>
</dbReference>
<dbReference type="PANTHER" id="PTHR20836">
    <property type="entry name" value="DIHYDRODIPICOLINATE REDUCTASE"/>
    <property type="match status" value="1"/>
</dbReference>
<dbReference type="Pfam" id="PF05173">
    <property type="entry name" value="DapB_C"/>
    <property type="match status" value="1"/>
</dbReference>
<dbReference type="Pfam" id="PF01113">
    <property type="entry name" value="DapB_N"/>
    <property type="match status" value="1"/>
</dbReference>
<dbReference type="PIRSF" id="PIRSF000161">
    <property type="entry name" value="DHPR"/>
    <property type="match status" value="1"/>
</dbReference>
<dbReference type="SUPFAM" id="SSF55347">
    <property type="entry name" value="Glyceraldehyde-3-phosphate dehydrogenase-like, C-terminal domain"/>
    <property type="match status" value="1"/>
</dbReference>
<dbReference type="SUPFAM" id="SSF51735">
    <property type="entry name" value="NAD(P)-binding Rossmann-fold domains"/>
    <property type="match status" value="1"/>
</dbReference>
<dbReference type="PROSITE" id="PS01298">
    <property type="entry name" value="DAPB"/>
    <property type="match status" value="1"/>
</dbReference>
<organism>
    <name type="scientific">Haemophilus influenzae (strain PittEE)</name>
    <dbReference type="NCBI Taxonomy" id="374930"/>
    <lineage>
        <taxon>Bacteria</taxon>
        <taxon>Pseudomonadati</taxon>
        <taxon>Pseudomonadota</taxon>
        <taxon>Gammaproteobacteria</taxon>
        <taxon>Pasteurellales</taxon>
        <taxon>Pasteurellaceae</taxon>
        <taxon>Haemophilus</taxon>
    </lineage>
</organism>
<comment type="function">
    <text evidence="1">Catalyzes the conversion of 4-hydroxy-tetrahydrodipicolinate (HTPA) to tetrahydrodipicolinate.</text>
</comment>
<comment type="catalytic activity">
    <reaction evidence="1">
        <text>(S)-2,3,4,5-tetrahydrodipicolinate + NAD(+) + H2O = (2S,4S)-4-hydroxy-2,3,4,5-tetrahydrodipicolinate + NADH + H(+)</text>
        <dbReference type="Rhea" id="RHEA:35323"/>
        <dbReference type="ChEBI" id="CHEBI:15377"/>
        <dbReference type="ChEBI" id="CHEBI:15378"/>
        <dbReference type="ChEBI" id="CHEBI:16845"/>
        <dbReference type="ChEBI" id="CHEBI:57540"/>
        <dbReference type="ChEBI" id="CHEBI:57945"/>
        <dbReference type="ChEBI" id="CHEBI:67139"/>
        <dbReference type="EC" id="1.17.1.8"/>
    </reaction>
</comment>
<comment type="catalytic activity">
    <reaction evidence="1">
        <text>(S)-2,3,4,5-tetrahydrodipicolinate + NADP(+) + H2O = (2S,4S)-4-hydroxy-2,3,4,5-tetrahydrodipicolinate + NADPH + H(+)</text>
        <dbReference type="Rhea" id="RHEA:35331"/>
        <dbReference type="ChEBI" id="CHEBI:15377"/>
        <dbReference type="ChEBI" id="CHEBI:15378"/>
        <dbReference type="ChEBI" id="CHEBI:16845"/>
        <dbReference type="ChEBI" id="CHEBI:57783"/>
        <dbReference type="ChEBI" id="CHEBI:58349"/>
        <dbReference type="ChEBI" id="CHEBI:67139"/>
        <dbReference type="EC" id="1.17.1.8"/>
    </reaction>
</comment>
<comment type="pathway">
    <text evidence="1">Amino-acid biosynthesis; L-lysine biosynthesis via DAP pathway; (S)-tetrahydrodipicolinate from L-aspartate: step 4/4.</text>
</comment>
<comment type="subcellular location">
    <subcellularLocation>
        <location evidence="1">Cytoplasm</location>
    </subcellularLocation>
</comment>
<comment type="similarity">
    <text evidence="1">Belongs to the DapB family.</text>
</comment>
<comment type="caution">
    <text evidence="2">Was originally thought to be a dihydrodipicolinate reductase (DHDPR), catalyzing the conversion of dihydrodipicolinate to tetrahydrodipicolinate. However, it was shown in E.coli that the substrate of the enzymatic reaction is not dihydrodipicolinate (DHDP) but in fact (2S,4S)-4-hydroxy-2,3,4,5-tetrahydrodipicolinic acid (HTPA), the product released by the DapA-catalyzed reaction.</text>
</comment>
<feature type="chain" id="PRO_1000008567" description="4-hydroxy-tetrahydrodipicolinate reductase">
    <location>
        <begin position="1"/>
        <end position="270"/>
    </location>
</feature>
<feature type="active site" description="Proton donor/acceptor" evidence="1">
    <location>
        <position position="156"/>
    </location>
</feature>
<feature type="active site" description="Proton donor" evidence="1">
    <location>
        <position position="160"/>
    </location>
</feature>
<feature type="binding site" evidence="1">
    <location>
        <begin position="9"/>
        <end position="14"/>
    </location>
    <ligand>
        <name>NAD(+)</name>
        <dbReference type="ChEBI" id="CHEBI:57540"/>
    </ligand>
</feature>
<feature type="binding site" evidence="1">
    <location>
        <position position="35"/>
    </location>
    <ligand>
        <name>NAD(+)</name>
        <dbReference type="ChEBI" id="CHEBI:57540"/>
    </ligand>
</feature>
<feature type="binding site" evidence="1">
    <location>
        <position position="36"/>
    </location>
    <ligand>
        <name>NADP(+)</name>
        <dbReference type="ChEBI" id="CHEBI:58349"/>
    </ligand>
</feature>
<feature type="binding site" evidence="1">
    <location>
        <begin position="99"/>
        <end position="101"/>
    </location>
    <ligand>
        <name>NAD(+)</name>
        <dbReference type="ChEBI" id="CHEBI:57540"/>
    </ligand>
</feature>
<feature type="binding site" evidence="1">
    <location>
        <begin position="123"/>
        <end position="126"/>
    </location>
    <ligand>
        <name>NAD(+)</name>
        <dbReference type="ChEBI" id="CHEBI:57540"/>
    </ligand>
</feature>
<feature type="binding site" evidence="1">
    <location>
        <position position="157"/>
    </location>
    <ligand>
        <name>(S)-2,3,4,5-tetrahydrodipicolinate</name>
        <dbReference type="ChEBI" id="CHEBI:16845"/>
    </ligand>
</feature>
<feature type="binding site" evidence="1">
    <location>
        <begin position="166"/>
        <end position="167"/>
    </location>
    <ligand>
        <name>(S)-2,3,4,5-tetrahydrodipicolinate</name>
        <dbReference type="ChEBI" id="CHEBI:16845"/>
    </ligand>
</feature>
<evidence type="ECO:0000255" key="1">
    <source>
        <dbReference type="HAMAP-Rule" id="MF_00102"/>
    </source>
</evidence>
<evidence type="ECO:0000305" key="2"/>
<protein>
    <recommendedName>
        <fullName evidence="1">4-hydroxy-tetrahydrodipicolinate reductase</fullName>
        <shortName evidence="1">HTPA reductase</shortName>
        <ecNumber evidence="1">1.17.1.8</ecNumber>
    </recommendedName>
</protein>
<gene>
    <name evidence="1" type="primary">dapB</name>
    <name type="ordered locus">CGSHiEE_05135</name>
</gene>
<sequence length="270" mass="28923">MTLKIAIAGAGGRMGRQLIQAVHSAEGVELGAAFERKGSSLVGTDAGELAGIGHLGVAVSDDLESQKDKFDLLIDFTRPEGSLEHIAFCVANNKKMVIGTTGFDQNGKAAIKAASDKIAIVFASNFSVGVNLVFKLLEKAAKVMGDYCDIEVIEAHHRHKVDAPSGTALSMGEHIAKTLGRDLKTHGVFCREGITGERKRDEIGFSTIRASDVVGEHMVWFADIGERVEISHKASSRMTFANGAVRAGKWLENKANGLFDMTDVLDLNNL</sequence>
<reference key="1">
    <citation type="journal article" date="2007" name="Genome Biol.">
        <title>Characterization and modeling of the Haemophilus influenzae core and supragenomes based on the complete genomic sequences of Rd and 12 clinical nontypeable strains.</title>
        <authorList>
            <person name="Hogg J.S."/>
            <person name="Hu F.Z."/>
            <person name="Janto B."/>
            <person name="Boissy R."/>
            <person name="Hayes J."/>
            <person name="Keefe R."/>
            <person name="Post J.C."/>
            <person name="Ehrlich G.D."/>
        </authorList>
    </citation>
    <scope>NUCLEOTIDE SEQUENCE [LARGE SCALE GENOMIC DNA]</scope>
    <source>
        <strain>PittEE</strain>
    </source>
</reference>
<proteinExistence type="inferred from homology"/>
<accession>A5UCB3</accession>
<name>DAPB_HAEIE</name>